<dbReference type="EC" id="7.2.1.4" evidence="3"/>
<dbReference type="EMBL" id="X73123">
    <property type="protein sequence ID" value="CAA51554.1"/>
    <property type="molecule type" value="Genomic_DNA"/>
</dbReference>
<dbReference type="EMBL" id="CP001710">
    <property type="protein sequence ID" value="ADL59124.1"/>
    <property type="molecule type" value="Genomic_DNA"/>
</dbReference>
<dbReference type="RefSeq" id="WP_013296334.1">
    <property type="nucleotide sequence ID" value="NC_014408.1"/>
</dbReference>
<dbReference type="PDB" id="8Q3V">
    <property type="method" value="EM"/>
    <property type="resolution" value="2.08 A"/>
    <property type="chains" value="C/S/c=1-267"/>
</dbReference>
<dbReference type="PDB" id="8Q54">
    <property type="method" value="EM"/>
    <property type="resolution" value="2.39 A"/>
    <property type="chains" value="C/S/c=1-267"/>
</dbReference>
<dbReference type="PDBsum" id="8Q3V"/>
<dbReference type="PDBsum" id="8Q54"/>
<dbReference type="EMDB" id="EMD-18135"/>
<dbReference type="EMDB" id="EMD-18162"/>
<dbReference type="SMR" id="P80185"/>
<dbReference type="STRING" id="79929.MTBMA_c15450"/>
<dbReference type="TCDB" id="3.C.1.1.1">
    <property type="family name" value="the na(+) transporting methyltetrahydromethanopterin:coenzyme m methyltransferase (nat-mmm) family"/>
</dbReference>
<dbReference type="PaxDb" id="79929-MTBMA_c15450"/>
<dbReference type="GeneID" id="77400316"/>
<dbReference type="GeneID" id="9705254"/>
<dbReference type="KEGG" id="mmg:MTBMA_c15450"/>
<dbReference type="PATRIC" id="fig|79929.8.peg.1498"/>
<dbReference type="HOGENOM" id="CLU_092286_0_0_2"/>
<dbReference type="OrthoDB" id="60591at2157"/>
<dbReference type="UniPathway" id="UPA00640">
    <property type="reaction ID" value="UER00698"/>
</dbReference>
<dbReference type="Proteomes" id="UP000000345">
    <property type="component" value="Chromosome"/>
</dbReference>
<dbReference type="GO" id="GO:0034708">
    <property type="term" value="C:methyltransferase complex"/>
    <property type="evidence" value="ECO:0000314"/>
    <property type="project" value="UniProtKB"/>
</dbReference>
<dbReference type="GO" id="GO:0005886">
    <property type="term" value="C:plasma membrane"/>
    <property type="evidence" value="ECO:0007669"/>
    <property type="project" value="UniProtKB-SubCell"/>
</dbReference>
<dbReference type="GO" id="GO:0030269">
    <property type="term" value="F:tetrahydromethanopterin S-methyltransferase activity"/>
    <property type="evidence" value="ECO:0007669"/>
    <property type="project" value="UniProtKB-UniRule"/>
</dbReference>
<dbReference type="GO" id="GO:0019386">
    <property type="term" value="P:methanogenesis, from carbon dioxide"/>
    <property type="evidence" value="ECO:0007669"/>
    <property type="project" value="UniProtKB-UniRule"/>
</dbReference>
<dbReference type="GO" id="GO:0032259">
    <property type="term" value="P:methylation"/>
    <property type="evidence" value="ECO:0007669"/>
    <property type="project" value="UniProtKB-KW"/>
</dbReference>
<dbReference type="GO" id="GO:0006730">
    <property type="term" value="P:one-carbon metabolic process"/>
    <property type="evidence" value="ECO:0007669"/>
    <property type="project" value="UniProtKB-UniRule"/>
</dbReference>
<dbReference type="HAMAP" id="MF_01096">
    <property type="entry name" value="MtrC"/>
    <property type="match status" value="1"/>
</dbReference>
<dbReference type="InterPro" id="IPR005865">
    <property type="entry name" value="THM_MeTrfase_su_C"/>
</dbReference>
<dbReference type="NCBIfam" id="TIGR01148">
    <property type="entry name" value="mtrC"/>
    <property type="match status" value="1"/>
</dbReference>
<dbReference type="Pfam" id="PF04211">
    <property type="entry name" value="MtrC"/>
    <property type="match status" value="1"/>
</dbReference>
<dbReference type="PIRSF" id="PIRSF006530">
    <property type="entry name" value="MtrC"/>
    <property type="match status" value="1"/>
</dbReference>
<sequence length="267" mass="27117">MSVAAGGPAGAAIPESRLMALGILGGLAGIYASAVNPVIGPVLASLGAVCAIVWGADAIRRVASYGLGTGVPSIGYMSVSIGIVGVVAGLASVFVVPAIAVPVVALILAMILGVVVAVLGKKIVKMKIPILEKCTAEISGAAALSVLGFSAAIAGSYTLQTMLTSVITTGFIGLLFILNTMAIQHPFNACLGPNENQTRTLKLAASTGFISMAIVGLLGIGLNPSWWLVSLIGALCWIVAFRAFVSASFEEAASVKWSGLWPKEEEH</sequence>
<comment type="function">
    <text evidence="3">Part of a complex that catalyzes the formation of methyl-coenzyme M and tetrahydromethanopterin from coenzyme M and methyl-tetrahydromethanopterin. This is an energy-conserving, sodium-ion translocating step.</text>
</comment>
<comment type="catalytic activity">
    <reaction evidence="3">
        <text>5-methyl-5,6,7,8-tetrahydromethanopterin + coenzyme M + 2 Na(+)(in) = 5,6,7,8-tetrahydromethanopterin + methyl-coenzyme M + 2 Na(+)(out)</text>
        <dbReference type="Rhea" id="RHEA:53492"/>
        <dbReference type="ChEBI" id="CHEBI:29101"/>
        <dbReference type="ChEBI" id="CHEBI:58103"/>
        <dbReference type="ChEBI" id="CHEBI:58116"/>
        <dbReference type="ChEBI" id="CHEBI:58286"/>
        <dbReference type="ChEBI" id="CHEBI:58319"/>
        <dbReference type="EC" id="7.2.1.4"/>
    </reaction>
</comment>
<comment type="biophysicochemical properties">
    <kinetics>
        <KM evidence="3">260 uM for 5-methyl-5,6,7,8-tetrahydromethanopterin</KM>
        <KM evidence="3">60 uM for coenzyme M</KM>
        <Vmax evidence="3">11.6 umol/min/mg enzyme</Vmax>
        <text evidence="3">From other experiments a much lower Km for 5-methyl-5,6,7,8-tetrahydromethanopterin is estimated.</text>
    </kinetics>
</comment>
<comment type="pathway">
    <text>One-carbon metabolism; methanogenesis from CO(2); methyl-coenzyme M from 5,10-methylene-5,6,7,8-tetrahydromethanopterin: step 2/2.</text>
</comment>
<comment type="subunit">
    <text evidence="2">The complex is composed of 8 subunits; MtrA, MtrB, MtrC, MtrD, MtrE, MtrF, MtrG and MtrH.</text>
</comment>
<comment type="subcellular location">
    <subcellularLocation>
        <location evidence="5">Cell membrane</location>
        <topology evidence="5">Multi-pass membrane protein</topology>
    </subcellularLocation>
</comment>
<comment type="induction">
    <text evidence="6">Part of the probable mtrEDCBAFGH operon.</text>
</comment>
<comment type="similarity">
    <text evidence="5">Belongs to the MtrC family.</text>
</comment>
<name>MTRC_METTM</name>
<proteinExistence type="evidence at protein level"/>
<protein>
    <recommendedName>
        <fullName>Tetrahydromethanopterin S-methyltransferase subunit C</fullName>
        <ecNumber evidence="3">7.2.1.4</ecNumber>
    </recommendedName>
    <alternativeName>
        <fullName>N5-methyltetrahydromethanopterin--coenzyme M methyltransferase subunit C</fullName>
    </alternativeName>
</protein>
<gene>
    <name evidence="4" type="primary">mtrC</name>
    <name type="ordered locus">MTBMA_c15450</name>
</gene>
<accession>P80185</accession>
<accession>D9PY26</accession>
<accession>Q59583</accession>
<organism>
    <name type="scientific">Methanothermobacter marburgensis (strain ATCC BAA-927 / DSM 2133 / JCM 14651 / NBRC 100331 / OCM 82 / Marburg)</name>
    <name type="common">Methanobacterium thermoautotrophicum</name>
    <dbReference type="NCBI Taxonomy" id="79929"/>
    <lineage>
        <taxon>Archaea</taxon>
        <taxon>Methanobacteriati</taxon>
        <taxon>Methanobacteriota</taxon>
        <taxon>Methanomada group</taxon>
        <taxon>Methanobacteria</taxon>
        <taxon>Methanobacteriales</taxon>
        <taxon>Methanobacteriaceae</taxon>
        <taxon>Methanothermobacter</taxon>
    </lineage>
</organism>
<keyword id="KW-0002">3D-structure</keyword>
<keyword id="KW-1003">Cell membrane</keyword>
<keyword id="KW-0903">Direct protein sequencing</keyword>
<keyword id="KW-0472">Membrane</keyword>
<keyword id="KW-0484">Methanogenesis</keyword>
<keyword id="KW-0489">Methyltransferase</keyword>
<keyword id="KW-0554">One-carbon metabolism</keyword>
<keyword id="KW-0808">Transferase</keyword>
<keyword id="KW-1278">Translocase</keyword>
<keyword id="KW-0812">Transmembrane</keyword>
<keyword id="KW-1133">Transmembrane helix</keyword>
<reference key="1">
    <citation type="journal article" date="1993" name="Eur. J. Biochem.">
        <title>Cloning, sequencing and immunological characterization of the corrinoid-containing subunit of the N5-methyltetrahydromethanopterin: coenzyme-M methyltransferase from Methanobacterium thermoautotrophicum.</title>
        <authorList>
            <person name="Stupperich E."/>
            <person name="Juza A."/>
            <person name="Hoppert M."/>
            <person name="Mayer F."/>
        </authorList>
    </citation>
    <scope>NUCLEOTIDE SEQUENCE [GENOMIC DNA]</scope>
    <source>
        <strain>ATCC BAA-927 / DSM 2133 / JCM 14651 / NBRC 100331 / OCM 82 / Marburg</strain>
    </source>
</reference>
<reference key="2">
    <citation type="journal article" date="2010" name="J. Bacteriol.">
        <title>Complete genome sequence of Methanothermobacter marburgensis, a methanoarchaeon model organism.</title>
        <authorList>
            <person name="Liesegang H."/>
            <person name="Kaster A.K."/>
            <person name="Wiezer A."/>
            <person name="Goenrich M."/>
            <person name="Wollherr A."/>
            <person name="Seedorf H."/>
            <person name="Gottschalk G."/>
            <person name="Thauer R.K."/>
        </authorList>
    </citation>
    <scope>NUCLEOTIDE SEQUENCE [LARGE SCALE GENOMIC DNA]</scope>
    <source>
        <strain>ATCC BAA-927 / DSM 2133 / JCM 14651 / NBRC 100331 / OCM 82 / Marburg</strain>
    </source>
</reference>
<reference key="3">
    <citation type="journal article" date="1993" name="Eur. J. Biochem.">
        <title>Purification and properties of N5-methyltetrahydromethanopterin:coenzyme M methyltransferase from Methanobacterium thermoautotrophicum.</title>
        <authorList>
            <person name="Gaertner P."/>
            <person name="Ecker A."/>
            <person name="Fischer R."/>
            <person name="Linder D."/>
            <person name="Fuchs G."/>
            <person name="Thauer R.K."/>
        </authorList>
    </citation>
    <scope>PROTEIN SEQUENCE OF 2-31</scope>
    <scope>FUNCTION</scope>
    <scope>CATALYTIC ACTIVITY</scope>
    <scope>BIOPHYSICOCHEMICAL PROPERTIES</scope>
    <source>
        <strain>ATCC BAA-927 / DSM 2133 / JCM 14651 / NBRC 100331 / OCM 82 / Marburg</strain>
    </source>
</reference>
<reference key="4">
    <citation type="journal article" date="1995" name="Eur. J. Biochem.">
        <title>The energy conserving N5-methyltetrahydromethanopterin:coenzyme M methyltransferase complex from Methanobacterium thermoautotrophicum is composed of eight different subunits.</title>
        <authorList>
            <person name="Harms U."/>
            <person name="Weiss D.S."/>
            <person name="Gaertner P."/>
            <person name="Linder D."/>
            <person name="Thauer R.K."/>
        </authorList>
    </citation>
    <scope>SUBUNIT</scope>
    <scope>OPERON STRUCTURE</scope>
    <source>
        <strain>ATCC BAA-927 / DSM 2133 / JCM 14651 / NBRC 100331 / OCM 82 / Marburg</strain>
    </source>
</reference>
<feature type="initiator methionine" description="Removed" evidence="3">
    <location>
        <position position="1"/>
    </location>
</feature>
<feature type="chain" id="PRO_0000147527" description="Tetrahydromethanopterin S-methyltransferase subunit C">
    <location>
        <begin position="2"/>
        <end position="267"/>
    </location>
</feature>
<feature type="transmembrane region" description="Helical" evidence="1">
    <location>
        <begin position="18"/>
        <end position="38"/>
    </location>
</feature>
<feature type="transmembrane region" description="Helical" evidence="1">
    <location>
        <begin position="39"/>
        <end position="59"/>
    </location>
</feature>
<feature type="transmembrane region" description="Helical" evidence="1">
    <location>
        <begin position="76"/>
        <end position="96"/>
    </location>
</feature>
<feature type="transmembrane region" description="Helical" evidence="1">
    <location>
        <begin position="99"/>
        <end position="119"/>
    </location>
</feature>
<feature type="transmembrane region" description="Helical" evidence="1">
    <location>
        <begin position="138"/>
        <end position="158"/>
    </location>
</feature>
<feature type="transmembrane region" description="Helical" evidence="1">
    <location>
        <begin position="163"/>
        <end position="183"/>
    </location>
</feature>
<feature type="transmembrane region" description="Helical" evidence="1">
    <location>
        <begin position="209"/>
        <end position="229"/>
    </location>
</feature>
<feature type="transmembrane region" description="Helical" evidence="1">
    <location>
        <begin position="230"/>
        <end position="250"/>
    </location>
</feature>
<feature type="sequence conflict" description="In Ref. 3; AA sequence." evidence="5" ref="3">
    <original>Y</original>
    <variation>S</variation>
    <location>
        <position position="31"/>
    </location>
</feature>
<evidence type="ECO:0000255" key="1"/>
<evidence type="ECO:0000269" key="2">
    <source>
    </source>
</evidence>
<evidence type="ECO:0000269" key="3">
    <source>
    </source>
</evidence>
<evidence type="ECO:0000303" key="4">
    <source>
    </source>
</evidence>
<evidence type="ECO:0000305" key="5"/>
<evidence type="ECO:0000305" key="6">
    <source>
    </source>
</evidence>